<gene>
    <name evidence="1" type="primary">NS</name>
</gene>
<name>NEP_I56A2</name>
<dbReference type="EMBL" id="CY014683">
    <property type="protein sequence ID" value="ABI84551.1"/>
    <property type="molecule type" value="Genomic_RNA"/>
</dbReference>
<dbReference type="EMBL" id="M16563">
    <property type="protein sequence ID" value="AAA43511.1"/>
    <property type="molecule type" value="Genomic_RNA"/>
</dbReference>
<dbReference type="SMR" id="P08273"/>
<dbReference type="Proteomes" id="UP000155465">
    <property type="component" value="Genome"/>
</dbReference>
<dbReference type="GO" id="GO:0042025">
    <property type="term" value="C:host cell nucleus"/>
    <property type="evidence" value="ECO:0007669"/>
    <property type="project" value="UniProtKB-SubCell"/>
</dbReference>
<dbReference type="GO" id="GO:0044423">
    <property type="term" value="C:virion component"/>
    <property type="evidence" value="ECO:0007669"/>
    <property type="project" value="UniProtKB-UniRule"/>
</dbReference>
<dbReference type="GO" id="GO:0039675">
    <property type="term" value="P:exit of virus from host cell nucleus through nuclear pore"/>
    <property type="evidence" value="ECO:0007669"/>
    <property type="project" value="UniProtKB-UniRule"/>
</dbReference>
<dbReference type="Gene3D" id="1.10.287.230">
    <property type="match status" value="1"/>
</dbReference>
<dbReference type="Gene3D" id="1.10.287.10">
    <property type="entry name" value="S15/NS1, RNA-binding"/>
    <property type="match status" value="1"/>
</dbReference>
<dbReference type="HAMAP" id="MF_04067">
    <property type="entry name" value="INFV_NEP"/>
    <property type="match status" value="1"/>
</dbReference>
<dbReference type="InterPro" id="IPR000968">
    <property type="entry name" value="Flu_NS2"/>
</dbReference>
<dbReference type="Pfam" id="PF00601">
    <property type="entry name" value="Flu_NS2"/>
    <property type="match status" value="1"/>
</dbReference>
<dbReference type="SUPFAM" id="SSF101156">
    <property type="entry name" value="Nonstructural protein ns2, Nep, M1-binding domain"/>
    <property type="match status" value="1"/>
</dbReference>
<proteinExistence type="inferred from homology"/>
<keyword id="KW-0025">Alternative splicing</keyword>
<keyword id="KW-1048">Host nucleus</keyword>
<keyword id="KW-0945">Host-virus interaction</keyword>
<keyword id="KW-0813">Transport</keyword>
<keyword id="KW-0946">Virion</keyword>
<protein>
    <recommendedName>
        <fullName evidence="1">Nuclear export protein</fullName>
        <shortName evidence="1">NEP</shortName>
    </recommendedName>
    <alternativeName>
        <fullName evidence="1">Non-structural protein 2</fullName>
        <shortName evidence="1">NS2</shortName>
    </alternativeName>
</protein>
<evidence type="ECO:0000255" key="1">
    <source>
        <dbReference type="HAMAP-Rule" id="MF_04067"/>
    </source>
</evidence>
<reference key="1">
    <citation type="journal article" date="2006" name="Science">
        <title>Large-scale sequence analysis of avian influenza isolates.</title>
        <authorList>
            <person name="Obenauer J.C."/>
            <person name="Denson J."/>
            <person name="Mehta P.K."/>
            <person name="Su X."/>
            <person name="Mukatira S."/>
            <person name="Finkelstein D.B."/>
            <person name="Xu X."/>
            <person name="Wang J."/>
            <person name="Ma J."/>
            <person name="Fan Y."/>
            <person name="Rakestraw K.M."/>
            <person name="Webster R.G."/>
            <person name="Hoffmann E."/>
            <person name="Krauss S."/>
            <person name="Zheng J."/>
            <person name="Zhang Z."/>
            <person name="Naeve C.W."/>
        </authorList>
    </citation>
    <scope>NUCLEOTIDE SEQUENCE [GENOMIC RNA]</scope>
</reference>
<reference key="2">
    <citation type="journal article" date="1987" name="Virology">
        <title>Genetic divergence of the NS genes of avian influenza viruses.</title>
        <authorList>
            <person name="Nakajima K."/>
            <person name="Nobusawa E."/>
            <person name="Ogawa T."/>
            <person name="Nakajima S."/>
        </authorList>
    </citation>
    <scope>NUCLEOTIDE SEQUENCE [GENOMIC RNA] OF 4-121</scope>
</reference>
<sequence>MDSNTVSSFQDILMRMSKMQLGSSSEDLNGMITQFESLKLYRNSLGEAVMRMGDLHSLQSRNGKWREQLSQKFEEIRWLIEEVRHRLKITENSFEQITFMQALQLLLEVEQEIRTFSFQLI</sequence>
<accession>P08273</accession>
<accession>Q0A432</accession>
<feature type="chain" id="PRO_0000078983" description="Nuclear export protein">
    <location>
        <begin position="1"/>
        <end position="121"/>
    </location>
</feature>
<feature type="short sequence motif" description="Nuclear export signal" evidence="1">
    <location>
        <begin position="12"/>
        <end position="21"/>
    </location>
</feature>
<feature type="short sequence motif" description="Nuclear export signal" evidence="1">
    <location>
        <begin position="85"/>
        <end position="94"/>
    </location>
</feature>
<feature type="sequence conflict" description="In Ref. 2; AAA43511." ref="2">
    <original>L</original>
    <variation>V</variation>
    <location>
        <position position="87"/>
    </location>
</feature>
<organism>
    <name type="scientific">Influenza A virus (strain A/Duck/England/1/1956 H11N6)</name>
    <dbReference type="NCBI Taxonomy" id="383550"/>
    <lineage>
        <taxon>Viruses</taxon>
        <taxon>Riboviria</taxon>
        <taxon>Orthornavirae</taxon>
        <taxon>Negarnaviricota</taxon>
        <taxon>Polyploviricotina</taxon>
        <taxon>Insthoviricetes</taxon>
        <taxon>Articulavirales</taxon>
        <taxon>Orthomyxoviridae</taxon>
        <taxon>Alphainfluenzavirus</taxon>
        <taxon>Alphainfluenzavirus influenzae</taxon>
        <taxon>Influenza A virus</taxon>
    </lineage>
</organism>
<organismHost>
    <name type="scientific">Aves</name>
    <dbReference type="NCBI Taxonomy" id="8782"/>
</organismHost>
<comment type="function">
    <text evidence="1">Mediates the nuclear export of encapsidated genomic RNAs (ribonucleoproteins, RNPs). Acts as an adapter between viral RNPs complexes and the nuclear export machinery of the cell. Possesses no intrinsic RNA-binding activity, but includes a C-terminal M1-binding domain. This domain is believed to allow recognition of RNPs bound to the protein M1. Since protein M1 is not available in large quantities before late stages of infection, such an indirect recognition mechanism probably ensures that genomic RNPs are not exported from the host nucleus until sufficient quantities of viral mRNA and progeny genomic RNA have been synthesized. Furthermore, the RNPs enter the host cytoplasm only when associated with the M1 protein that is necessary to guide them to the plasma membrane. May down-regulate viral RNA synthesis when overproduced.</text>
</comment>
<comment type="subunit">
    <text evidence="1">Interacts with protein M1. May interact with host nucleoporin RAB/HRB and exportin XPO1/CRM1.</text>
</comment>
<comment type="subcellular location">
    <subcellularLocation>
        <location evidence="1">Virion</location>
    </subcellularLocation>
    <subcellularLocation>
        <location evidence="1">Host nucleus</location>
    </subcellularLocation>
</comment>
<comment type="alternative products">
    <event type="alternative splicing"/>
    <isoform>
        <id>P08273-1</id>
        <name>NEP</name>
        <name>NS2</name>
        <sequence type="displayed"/>
    </isoform>
    <isoform>
        <id>P08272-1</id>
        <name>NS1</name>
        <sequence type="external"/>
    </isoform>
</comment>
<comment type="miscellaneous">
    <text>Average number present in a viral particle is estimated to be 130-200 molecules.</text>
</comment>
<comment type="similarity">
    <text evidence="1">Belongs to the influenza viruses NEP family.</text>
</comment>